<reference key="1">
    <citation type="journal article" date="1988" name="EMBO J.">
        <title>MAS1, a gene essential for yeast mitochondrial assembly, encodes a subunit of the mitochondrial processing protease.</title>
        <authorList>
            <person name="Witte C."/>
            <person name="Jensen R.E."/>
            <person name="Yaffe M.P."/>
            <person name="Schatz G."/>
        </authorList>
    </citation>
    <scope>NUCLEOTIDE SEQUENCE [GENOMIC DNA]</scope>
    <scope>SUBCELLULAR LOCATION</scope>
</reference>
<reference key="2">
    <citation type="journal article" date="1997" name="Nature">
        <title>The nucleotide sequence of Saccharomyces cerevisiae chromosome XII.</title>
        <authorList>
            <person name="Johnston M."/>
            <person name="Hillier L.W."/>
            <person name="Riles L."/>
            <person name="Albermann K."/>
            <person name="Andre B."/>
            <person name="Ansorge W."/>
            <person name="Benes V."/>
            <person name="Brueckner M."/>
            <person name="Delius H."/>
            <person name="Dubois E."/>
            <person name="Duesterhoeft A."/>
            <person name="Entian K.-D."/>
            <person name="Floeth M."/>
            <person name="Goffeau A."/>
            <person name="Hebling U."/>
            <person name="Heumann K."/>
            <person name="Heuss-Neitzel D."/>
            <person name="Hilbert H."/>
            <person name="Hilger F."/>
            <person name="Kleine K."/>
            <person name="Koetter P."/>
            <person name="Louis E.J."/>
            <person name="Messenguy F."/>
            <person name="Mewes H.-W."/>
            <person name="Miosga T."/>
            <person name="Moestl D."/>
            <person name="Mueller-Auer S."/>
            <person name="Nentwich U."/>
            <person name="Obermaier B."/>
            <person name="Piravandi E."/>
            <person name="Pohl T.M."/>
            <person name="Portetelle D."/>
            <person name="Purnelle B."/>
            <person name="Rechmann S."/>
            <person name="Rieger M."/>
            <person name="Rinke M."/>
            <person name="Rose M."/>
            <person name="Scharfe M."/>
            <person name="Scherens B."/>
            <person name="Scholler P."/>
            <person name="Schwager C."/>
            <person name="Schwarz S."/>
            <person name="Underwood A.P."/>
            <person name="Urrestarazu L.A."/>
            <person name="Vandenbol M."/>
            <person name="Verhasselt P."/>
            <person name="Vierendeels F."/>
            <person name="Voet M."/>
            <person name="Volckaert G."/>
            <person name="Voss H."/>
            <person name="Wambutt R."/>
            <person name="Wedler E."/>
            <person name="Wedler H."/>
            <person name="Zimmermann F.K."/>
            <person name="Zollner A."/>
            <person name="Hani J."/>
            <person name="Hoheisel J.D."/>
        </authorList>
    </citation>
    <scope>NUCLEOTIDE SEQUENCE [LARGE SCALE GENOMIC DNA]</scope>
    <source>
        <strain>ATCC 204508 / S288c</strain>
    </source>
</reference>
<reference key="3">
    <citation type="journal article" date="2014" name="G3 (Bethesda)">
        <title>The reference genome sequence of Saccharomyces cerevisiae: Then and now.</title>
        <authorList>
            <person name="Engel S.R."/>
            <person name="Dietrich F.S."/>
            <person name="Fisk D.G."/>
            <person name="Binkley G."/>
            <person name="Balakrishnan R."/>
            <person name="Costanzo M.C."/>
            <person name="Dwight S.S."/>
            <person name="Hitz B.C."/>
            <person name="Karra K."/>
            <person name="Nash R.S."/>
            <person name="Weng S."/>
            <person name="Wong E.D."/>
            <person name="Lloyd P."/>
            <person name="Skrzypek M.S."/>
            <person name="Miyasato S.R."/>
            <person name="Simison M."/>
            <person name="Cherry J.M."/>
        </authorList>
    </citation>
    <scope>GENOME REANNOTATION</scope>
    <source>
        <strain>ATCC 204508 / S288c</strain>
    </source>
</reference>
<reference key="4">
    <citation type="journal article" date="2007" name="Genome Res.">
        <title>Approaching a complete repository of sequence-verified protein-encoding clones for Saccharomyces cerevisiae.</title>
        <authorList>
            <person name="Hu Y."/>
            <person name="Rolfs A."/>
            <person name="Bhullar B."/>
            <person name="Murthy T.V.S."/>
            <person name="Zhu C."/>
            <person name="Berger M.F."/>
            <person name="Camargo A.A."/>
            <person name="Kelley F."/>
            <person name="McCarron S."/>
            <person name="Jepson D."/>
            <person name="Richardson A."/>
            <person name="Raphael J."/>
            <person name="Moreira D."/>
            <person name="Taycher E."/>
            <person name="Zuo D."/>
            <person name="Mohr S."/>
            <person name="Kane M.F."/>
            <person name="Williamson J."/>
            <person name="Simpson A.J.G."/>
            <person name="Bulyk M.L."/>
            <person name="Harlow E."/>
            <person name="Marsischky G."/>
            <person name="Kolodner R.D."/>
            <person name="LaBaer J."/>
        </authorList>
    </citation>
    <scope>NUCLEOTIDE SEQUENCE [GENOMIC DNA]</scope>
    <source>
        <strain>ATCC 204508 / S288c</strain>
    </source>
</reference>
<reference key="5">
    <citation type="journal article" date="1991" name="J. Biol. Chem.">
        <title>The MAS-encoded processing protease of yeast mitochondria. Interaction of the purified enzyme with signal peptides and a purified precursor protein.</title>
        <authorList>
            <person name="Yang M."/>
            <person name="Geli V."/>
            <person name="Oppliger W."/>
            <person name="Suda K."/>
            <person name="James P."/>
            <person name="Schatz G."/>
        </authorList>
    </citation>
    <scope>PROTEIN SEQUENCE OF 21-32</scope>
    <scope>FUNCTION</scope>
    <scope>CATALYTIC ACTIVITY</scope>
</reference>
<reference key="6">
    <citation type="journal article" date="1988" name="EMBO J.">
        <title>The processing peptidase of yeast mitochondria: the two co-operating components MPP and PEP are structurally related.</title>
        <authorList>
            <person name="Pollock R.A."/>
            <person name="Hartl F.-U."/>
            <person name="Cheng M.Y."/>
            <person name="Ostermann J."/>
            <person name="Horwich A."/>
            <person name="Neupert W."/>
        </authorList>
    </citation>
    <scope>FUNCTION</scope>
</reference>
<reference key="7">
    <citation type="journal article" date="1997" name="J. Mol. Biol.">
        <title>Functional cooperation of the mitochondrial processing peptidase subunits.</title>
        <authorList>
            <person name="Luciano P."/>
            <person name="Geoffroy S."/>
            <person name="Brandt A."/>
            <person name="Hernandez J.F."/>
            <person name="Geli V."/>
        </authorList>
    </citation>
    <scope>FUNCTION</scope>
    <scope>CATALYTIC ACTIVITY</scope>
    <scope>ACTIVITY REGULATION</scope>
    <scope>INTERACTION WITH MAS2</scope>
    <scope>MUTAGENESIS OF GLU-89; SER-133; TYR-198; LYS-234; PRO-249; THR-301; SER-333; LYS-364 AND ARG-400</scope>
</reference>
<reference key="8">
    <citation type="journal article" date="1998" name="J. Mol. Biol.">
        <title>The mitochondrial processing peptidase behaves as a zinc-metallopeptidase.</title>
        <authorList>
            <person name="Luciano P."/>
            <person name="Tokatlidis K."/>
            <person name="Chambre I."/>
            <person name="Germanique J.C."/>
            <person name="Geli V."/>
        </authorList>
    </citation>
    <scope>FUNCTION</scope>
    <scope>CATALYTIC ACTIVITY</scope>
    <scope>COFACTOR</scope>
    <scope>ACTIVITY REGULATION</scope>
    <scope>MUTAGENESIS OF HIS-70</scope>
</reference>
<reference key="9">
    <citation type="journal article" date="2003" name="Nature">
        <title>Global analysis of protein expression in yeast.</title>
        <authorList>
            <person name="Ghaemmaghami S."/>
            <person name="Huh W.-K."/>
            <person name="Bower K."/>
            <person name="Howson R.W."/>
            <person name="Belle A."/>
            <person name="Dephoure N."/>
            <person name="O'Shea E.K."/>
            <person name="Weissman J.S."/>
        </authorList>
    </citation>
    <scope>LEVEL OF PROTEIN EXPRESSION [LARGE SCALE ANALYSIS]</scope>
</reference>
<reference key="10">
    <citation type="journal article" date="2008" name="Mol. Cell. Proteomics">
        <title>A multidimensional chromatography technology for in-depth phosphoproteome analysis.</title>
        <authorList>
            <person name="Albuquerque C.P."/>
            <person name="Smolka M.B."/>
            <person name="Payne S.H."/>
            <person name="Bafna V."/>
            <person name="Eng J."/>
            <person name="Zhou H."/>
        </authorList>
    </citation>
    <scope>PHOSPHORYLATION [LARGE SCALE ANALYSIS] AT SER-243</scope>
    <scope>IDENTIFICATION BY MASS SPECTROMETRY [LARGE SCALE ANALYSIS]</scope>
</reference>
<reference key="11">
    <citation type="journal article" date="2014" name="Cell Metab.">
        <title>Amyloid-beta peptide induces mitochondrial dysfunction by inhibition of preprotein maturation.</title>
        <authorList>
            <person name="Mossmann D."/>
            <person name="Voegtle F.N."/>
            <person name="Taskin A.A."/>
            <person name="Teixeira P.F."/>
            <person name="Ring J."/>
            <person name="Burkhart J.M."/>
            <person name="Burger N."/>
            <person name="Pinho C.M."/>
            <person name="Tadic J."/>
            <person name="Loreth D."/>
            <person name="Graff C."/>
            <person name="Metzger F."/>
            <person name="Sickmann A."/>
            <person name="Kretz O."/>
            <person name="Wiedemann N."/>
            <person name="Zahedi R.P."/>
            <person name="Madeo F."/>
            <person name="Glaser E."/>
            <person name="Meisinger C."/>
        </authorList>
    </citation>
    <scope>DISRUPTION PHENOTYPE</scope>
</reference>
<reference key="12">
    <citation type="journal article" date="2001" name="Structure">
        <title>Crystal structures of mitochondrial processing peptidase reveal the mode for specific cleavage of import signal sequences.</title>
        <authorList>
            <person name="Taylor A.B."/>
            <person name="Smith B.S."/>
            <person name="Kitada S."/>
            <person name="Kojima K."/>
            <person name="Miyaura H."/>
            <person name="Otwinowski Z."/>
            <person name="Ito A."/>
            <person name="Deisenhofer J."/>
        </authorList>
    </citation>
    <scope>X-RAY CRYSTALLOGRAPHY (2.5 ANGSTROMS) OF 21-462 IN COMPLEX WITH MAS2; ZINC AND SUBSTRATES</scope>
    <scope>ACTIVE SITE</scope>
</reference>
<dbReference type="EC" id="3.4.24.64" evidence="5 8 9"/>
<dbReference type="EMBL" id="X07649">
    <property type="protein sequence ID" value="CAA30489.1"/>
    <property type="molecule type" value="Genomic_DNA"/>
</dbReference>
<dbReference type="EMBL" id="U51921">
    <property type="protein sequence ID" value="AAB67487.1"/>
    <property type="molecule type" value="Genomic_DNA"/>
</dbReference>
<dbReference type="EMBL" id="AY693198">
    <property type="protein sequence ID" value="AAT93217.1"/>
    <property type="molecule type" value="Genomic_DNA"/>
</dbReference>
<dbReference type="EMBL" id="BK006945">
    <property type="protein sequence ID" value="DAA09485.1"/>
    <property type="molecule type" value="Genomic_DNA"/>
</dbReference>
<dbReference type="PIR" id="S00552">
    <property type="entry name" value="S00552"/>
</dbReference>
<dbReference type="RefSeq" id="NP_013264.1">
    <property type="nucleotide sequence ID" value="NM_001182050.1"/>
</dbReference>
<dbReference type="PDB" id="1HR6">
    <property type="method" value="X-ray"/>
    <property type="resolution" value="2.50 A"/>
    <property type="chains" value="B/D/F/H=21-462"/>
</dbReference>
<dbReference type="PDB" id="1HR7">
    <property type="method" value="X-ray"/>
    <property type="resolution" value="2.55 A"/>
    <property type="chains" value="B/D/F/H=21-462"/>
</dbReference>
<dbReference type="PDB" id="1HR8">
    <property type="method" value="X-ray"/>
    <property type="resolution" value="2.70 A"/>
    <property type="chains" value="B/D/F/H=21-462"/>
</dbReference>
<dbReference type="PDB" id="1HR9">
    <property type="method" value="X-ray"/>
    <property type="resolution" value="3.01 A"/>
    <property type="chains" value="B/D/F/H=21-462"/>
</dbReference>
<dbReference type="PDBsum" id="1HR6"/>
<dbReference type="PDBsum" id="1HR7"/>
<dbReference type="PDBsum" id="1HR8"/>
<dbReference type="PDBsum" id="1HR9"/>
<dbReference type="SMR" id="P10507"/>
<dbReference type="BioGRID" id="31436">
    <property type="interactions" value="103"/>
</dbReference>
<dbReference type="ComplexPortal" id="CPX-1630">
    <property type="entry name" value="Mitochondrial processing peptidase complex"/>
</dbReference>
<dbReference type="DIP" id="DIP-2402N"/>
<dbReference type="FunCoup" id="P10507">
    <property type="interactions" value="1095"/>
</dbReference>
<dbReference type="IntAct" id="P10507">
    <property type="interactions" value="20"/>
</dbReference>
<dbReference type="MINT" id="P10507"/>
<dbReference type="STRING" id="4932.YLR163C"/>
<dbReference type="MEROPS" id="M16.003"/>
<dbReference type="MEROPS" id="M16.980"/>
<dbReference type="iPTMnet" id="P10507"/>
<dbReference type="PaxDb" id="4932-YLR163C"/>
<dbReference type="PeptideAtlas" id="P10507"/>
<dbReference type="EnsemblFungi" id="YLR163C_mRNA">
    <property type="protein sequence ID" value="YLR163C"/>
    <property type="gene ID" value="YLR163C"/>
</dbReference>
<dbReference type="GeneID" id="850860"/>
<dbReference type="KEGG" id="sce:YLR163C"/>
<dbReference type="AGR" id="SGD:S000004153"/>
<dbReference type="SGD" id="S000004153">
    <property type="gene designation" value="MAS1"/>
</dbReference>
<dbReference type="VEuPathDB" id="FungiDB:YLR163C"/>
<dbReference type="eggNOG" id="KOG0960">
    <property type="taxonomic scope" value="Eukaryota"/>
</dbReference>
<dbReference type="GeneTree" id="ENSGT00940000156608"/>
<dbReference type="HOGENOM" id="CLU_009902_4_0_1"/>
<dbReference type="InParanoid" id="P10507"/>
<dbReference type="OMA" id="IDVVCDM"/>
<dbReference type="OrthoDB" id="10251424at2759"/>
<dbReference type="BioCyc" id="MetaCyc:G3O-32293-MONOMER"/>
<dbReference type="BioCyc" id="YEAST:G3O-32293-MONOMER"/>
<dbReference type="BRENDA" id="3.4.24.64">
    <property type="organism ID" value="984"/>
</dbReference>
<dbReference type="Reactome" id="R-SCE-611105">
    <property type="pathway name" value="Respiratory electron transport"/>
</dbReference>
<dbReference type="SABIO-RK" id="P10507"/>
<dbReference type="BioGRID-ORCS" id="850860">
    <property type="hits" value="0 hits in 10 CRISPR screens"/>
</dbReference>
<dbReference type="EvolutionaryTrace" id="P10507"/>
<dbReference type="PRO" id="PR:P10507"/>
<dbReference type="Proteomes" id="UP000002311">
    <property type="component" value="Chromosome XII"/>
</dbReference>
<dbReference type="RNAct" id="P10507">
    <property type="molecule type" value="protein"/>
</dbReference>
<dbReference type="GO" id="GO:0005759">
    <property type="term" value="C:mitochondrial matrix"/>
    <property type="evidence" value="ECO:0000304"/>
    <property type="project" value="Reactome"/>
</dbReference>
<dbReference type="GO" id="GO:0017087">
    <property type="term" value="C:mitochondrial processing peptidase complex"/>
    <property type="evidence" value="ECO:0000314"/>
    <property type="project" value="UniProtKB"/>
</dbReference>
<dbReference type="GO" id="GO:0005739">
    <property type="term" value="C:mitochondrion"/>
    <property type="evidence" value="ECO:0000314"/>
    <property type="project" value="ComplexPortal"/>
</dbReference>
<dbReference type="GO" id="GO:0046872">
    <property type="term" value="F:metal ion binding"/>
    <property type="evidence" value="ECO:0007669"/>
    <property type="project" value="UniProtKB-KW"/>
</dbReference>
<dbReference type="GO" id="GO:0004222">
    <property type="term" value="F:metalloendopeptidase activity"/>
    <property type="evidence" value="ECO:0000314"/>
    <property type="project" value="UniProtKB"/>
</dbReference>
<dbReference type="GO" id="GO:0006627">
    <property type="term" value="P:protein processing involved in protein targeting to mitochondrion"/>
    <property type="evidence" value="ECO:0000314"/>
    <property type="project" value="ComplexPortal"/>
</dbReference>
<dbReference type="FunFam" id="3.30.830.10:FF:000002">
    <property type="entry name" value="Mitochondrial-processing peptidase subunit beta"/>
    <property type="match status" value="1"/>
</dbReference>
<dbReference type="FunFam" id="3.30.830.10:FF:000001">
    <property type="entry name" value="Mitochondrial-processing peptidase subunit beta, mitochondrial"/>
    <property type="match status" value="1"/>
</dbReference>
<dbReference type="Gene3D" id="3.30.830.10">
    <property type="entry name" value="Metalloenzyme, LuxS/M16 peptidase-like"/>
    <property type="match status" value="2"/>
</dbReference>
<dbReference type="InterPro" id="IPR011249">
    <property type="entry name" value="Metalloenz_LuxS/M16"/>
</dbReference>
<dbReference type="InterPro" id="IPR050361">
    <property type="entry name" value="MPP/UQCRC_Complex"/>
</dbReference>
<dbReference type="InterPro" id="IPR011765">
    <property type="entry name" value="Pept_M16_N"/>
</dbReference>
<dbReference type="InterPro" id="IPR001431">
    <property type="entry name" value="Pept_M16_Zn_BS"/>
</dbReference>
<dbReference type="InterPro" id="IPR007863">
    <property type="entry name" value="Peptidase_M16_C"/>
</dbReference>
<dbReference type="PANTHER" id="PTHR11851:SF149">
    <property type="entry name" value="GH01077P"/>
    <property type="match status" value="1"/>
</dbReference>
<dbReference type="PANTHER" id="PTHR11851">
    <property type="entry name" value="METALLOPROTEASE"/>
    <property type="match status" value="1"/>
</dbReference>
<dbReference type="Pfam" id="PF00675">
    <property type="entry name" value="Peptidase_M16"/>
    <property type="match status" value="1"/>
</dbReference>
<dbReference type="Pfam" id="PF05193">
    <property type="entry name" value="Peptidase_M16_C"/>
    <property type="match status" value="1"/>
</dbReference>
<dbReference type="SUPFAM" id="SSF63411">
    <property type="entry name" value="LuxS/MPP-like metallohydrolase"/>
    <property type="match status" value="2"/>
</dbReference>
<dbReference type="PROSITE" id="PS00143">
    <property type="entry name" value="INSULINASE"/>
    <property type="match status" value="1"/>
</dbReference>
<organism>
    <name type="scientific">Saccharomyces cerevisiae (strain ATCC 204508 / S288c)</name>
    <name type="common">Baker's yeast</name>
    <dbReference type="NCBI Taxonomy" id="559292"/>
    <lineage>
        <taxon>Eukaryota</taxon>
        <taxon>Fungi</taxon>
        <taxon>Dikarya</taxon>
        <taxon>Ascomycota</taxon>
        <taxon>Saccharomycotina</taxon>
        <taxon>Saccharomycetes</taxon>
        <taxon>Saccharomycetales</taxon>
        <taxon>Saccharomycetaceae</taxon>
        <taxon>Saccharomyces</taxon>
    </lineage>
</organism>
<name>MPPB_YEAST</name>
<comment type="function">
    <text evidence="1 5 8 9">Catalytic subunit of the essential mitochondrial processing protease (MPP), which cleaves the mitochondrial sequence off newly imported precursors proteins (PubMed:2007593, PubMed:9299349, PubMed:9654444). Preferentially, cleaves after an arginine at position P2 (By similarity).</text>
</comment>
<comment type="catalytic activity">
    <reaction evidence="5 8 9">
        <text>Release of N-terminal transit peptides from precursor proteins imported into the mitochondrion, typically with Arg in position P2.</text>
        <dbReference type="EC" id="3.4.24.64"/>
    </reaction>
</comment>
<comment type="cofactor">
    <cofactor evidence="9">
        <name>Zn(2+)</name>
        <dbReference type="ChEBI" id="CHEBI:29105"/>
    </cofactor>
    <text evidence="3 9">Binds 1 zinc ion per subunit.</text>
</comment>
<comment type="activity regulation">
    <text evidence="8 9">Binding to MAS2 is required for catalytic activity (PubMed:9299349, PubMed:9654444). Inhibited by high levels (&gt; 1uM) of zinc (PubMed:9654444). Inhibited by metal chelators ethylenediaminetetraacetic acid (EDTA) and O-phenanthroline (PubMed:9654444).</text>
</comment>
<comment type="subunit">
    <text evidence="3 8">Heterodimer of MAS2 (alpha) and MAS1 (beta) subunits, forming the mitochondrial processing protease (MPP) in which MAS2 is involved in substrate recognition and binding and MAS1 is the catalytic subunit.</text>
</comment>
<comment type="interaction">
    <interactant intactId="EBI-11212">
        <id>P10507</id>
    </interactant>
    <interactant intactId="EBI-11205">
        <id>P11914</id>
        <label>MAS2</label>
    </interactant>
    <organismsDiffer>false</organismsDiffer>
    <experiments>5</experiments>
</comment>
<comment type="subcellular location">
    <subcellularLocation>
        <location evidence="7">Mitochondrion matrix</location>
    </subcellularLocation>
</comment>
<comment type="disruption phenotype">
    <text evidence="6">Simultaneous disruption of the mitochondrial presequence protease CYM1 results in synthetic lethality in respiratory conditions.</text>
</comment>
<comment type="miscellaneous">
    <text evidence="4">Present with 1360 molecules/cell in log phase SD medium.</text>
</comment>
<comment type="similarity">
    <text evidence="13">Belongs to the peptidase M16 family.</text>
</comment>
<evidence type="ECO:0000250" key="1">
    <source>
        <dbReference type="UniProtKB" id="Q03346"/>
    </source>
</evidence>
<evidence type="ECO:0000255" key="2">
    <source>
        <dbReference type="PROSITE-ProRule" id="PRU10096"/>
    </source>
</evidence>
<evidence type="ECO:0000269" key="3">
    <source>
    </source>
</evidence>
<evidence type="ECO:0000269" key="4">
    <source>
    </source>
</evidence>
<evidence type="ECO:0000269" key="5">
    <source>
    </source>
</evidence>
<evidence type="ECO:0000269" key="6">
    <source>
    </source>
</evidence>
<evidence type="ECO:0000269" key="7">
    <source>
    </source>
</evidence>
<evidence type="ECO:0000269" key="8">
    <source>
    </source>
</evidence>
<evidence type="ECO:0000269" key="9">
    <source>
    </source>
</evidence>
<evidence type="ECO:0000303" key="10">
    <source>
    </source>
</evidence>
<evidence type="ECO:0000303" key="11">
    <source>
    </source>
</evidence>
<evidence type="ECO:0000303" key="12">
    <source>
    </source>
</evidence>
<evidence type="ECO:0000305" key="13"/>
<evidence type="ECO:0000312" key="14">
    <source>
        <dbReference type="SGD" id="S000004153"/>
    </source>
</evidence>
<evidence type="ECO:0007744" key="15">
    <source>
        <dbReference type="PDB" id="1HR6"/>
    </source>
</evidence>
<evidence type="ECO:0007744" key="16">
    <source>
        <dbReference type="PDB" id="1HR7"/>
    </source>
</evidence>
<evidence type="ECO:0007744" key="17">
    <source>
        <dbReference type="PDB" id="1HR8"/>
    </source>
</evidence>
<evidence type="ECO:0007744" key="18">
    <source>
        <dbReference type="PDB" id="1HR9"/>
    </source>
</evidence>
<evidence type="ECO:0007744" key="19">
    <source>
    </source>
</evidence>
<evidence type="ECO:0007829" key="20">
    <source>
        <dbReference type="PDB" id="1HR6"/>
    </source>
</evidence>
<accession>P10507</accession>
<accession>D6VYG9</accession>
<protein>
    <recommendedName>
        <fullName evidence="12">Mitochondrial-processing peptidase subunit beta</fullName>
        <ecNumber evidence="5 8 9">3.4.24.64</ecNumber>
    </recommendedName>
    <alternativeName>
        <fullName>Beta-MPP</fullName>
    </alternativeName>
    <alternativeName>
        <fullName evidence="10">Mitochondrial assembly protein 1</fullName>
    </alternativeName>
    <alternativeName>
        <fullName evidence="11">Processing enhancing protein</fullName>
        <shortName>PEP</shortName>
    </alternativeName>
</protein>
<gene>
    <name evidence="10" type="primary">MAS1</name>
    <name evidence="11" type="synonym">MIF1</name>
    <name evidence="14" type="ordered locus">YLR163C</name>
    <name type="ORF">L9632.10</name>
</gene>
<keyword id="KW-0002">3D-structure</keyword>
<keyword id="KW-0903">Direct protein sequencing</keyword>
<keyword id="KW-0378">Hydrolase</keyword>
<keyword id="KW-0479">Metal-binding</keyword>
<keyword id="KW-0482">Metalloprotease</keyword>
<keyword id="KW-0496">Mitochondrion</keyword>
<keyword id="KW-0597">Phosphoprotein</keyword>
<keyword id="KW-0645">Protease</keyword>
<keyword id="KW-1185">Reference proteome</keyword>
<keyword id="KW-0809">Transit peptide</keyword>
<keyword id="KW-0862">Zinc</keyword>
<sequence>MFSRTASKFRNTRRLLSTISSQIPGTRTSKLPNGLTIATEYIPNTSSATVGIFVDAGSRAENVKNNGTAHFLEHLAFKGTQNRSQQGIELEIENIGSHLNAYTSRENTVYYAKSLQEDIPKAVDILSDILTKSVLDNSAIERERDVIIRESEEVDKMYDEVVFDHLHEITYKDQPLGRTILGPIKNIKSITRTDLKDYITKNYKGDRMVLAGAGAVDHEKLVQYAQKYFGHVPKSESPVPLGSPRGPLPVFCRGERFIKENTLPTTHIAIALEGVSWSAPDYFVALATQAIVGNWDRAIGTGTNSPSPLAVAASQNGSLANSYMSFSTSYADSGLWGMYIVTDSNEHNVQLIVNEILKEWKRIKSGKISDAEVNRAKAQLKAALLLSLDGSTAIVEDIGRQVVTTGKRLSPEEVFEQVDKITKDDIIMWANYRLQNKPVSMVALGNTSTVPNVSYIEEKLNQ</sequence>
<proteinExistence type="evidence at protein level"/>
<feature type="transit peptide" description="Mitochondrion" evidence="5">
    <location>
        <begin position="1"/>
        <end position="20"/>
    </location>
</feature>
<feature type="chain" id="PRO_0000026784" description="Mitochondrial-processing peptidase subunit beta">
    <location>
        <begin position="21"/>
        <end position="462"/>
    </location>
</feature>
<feature type="active site" description="Proton acceptor" evidence="3 15">
    <location>
        <position position="73"/>
    </location>
</feature>
<feature type="binding site" evidence="2 3 9 15 16 17 18">
    <location>
        <position position="70"/>
    </location>
    <ligand>
        <name>Zn(2+)</name>
        <dbReference type="ChEBI" id="CHEBI:29105"/>
    </ligand>
</feature>
<feature type="binding site" evidence="2 3 15 16 17 18">
    <location>
        <position position="74"/>
    </location>
    <ligand>
        <name>Zn(2+)</name>
        <dbReference type="ChEBI" id="CHEBI:29105"/>
    </ligand>
</feature>
<feature type="binding site" evidence="2 3 15 16 17 18">
    <location>
        <position position="150"/>
    </location>
    <ligand>
        <name>Zn(2+)</name>
        <dbReference type="ChEBI" id="CHEBI:29105"/>
    </ligand>
</feature>
<feature type="modified residue" description="Phosphoserine" evidence="19">
    <location>
        <position position="243"/>
    </location>
</feature>
<feature type="mutagenesis site" description="Loss of zinc binding. Loss of catalytic activity." evidence="9">
    <original>H</original>
    <variation>R</variation>
    <location>
        <position position="70"/>
    </location>
</feature>
<feature type="mutagenesis site" description="Loss of catalytic activity and loss of binding to MAS2." evidence="8">
    <original>E</original>
    <variation>A</variation>
    <location>
        <position position="89"/>
    </location>
</feature>
<feature type="mutagenesis site" description="Loss of catalytic activity. No effect on the binding to MAS2." evidence="8">
    <original>S</original>
    <variation>A</variation>
    <location>
        <position position="133"/>
    </location>
</feature>
<feature type="mutagenesis site" description="No effect on catalytic activity." evidence="8">
    <original>Y</original>
    <variation>A</variation>
    <location>
        <position position="198"/>
    </location>
</feature>
<feature type="mutagenesis site" description="Loss of catalytic activity and loss of binding to MAS2." evidence="8">
    <original>K</original>
    <variation>A</variation>
    <location>
        <position position="234"/>
    </location>
</feature>
<feature type="mutagenesis site" description="No effect on catalytic activity." evidence="8">
    <original>P</original>
    <variation>A</variation>
    <location>
        <position position="249"/>
    </location>
</feature>
<feature type="mutagenesis site" description="No effect on catalytic activity." evidence="8">
    <original>T</original>
    <variation>A</variation>
    <location>
        <position position="301"/>
    </location>
</feature>
<feature type="mutagenesis site" description="Loss of catalytic activity. No effect on the binding to MAS2." evidence="8">
    <original>S</original>
    <variation>A</variation>
    <location>
        <position position="333"/>
    </location>
</feature>
<feature type="mutagenesis site" description="No effect on catalytic activity." evidence="8">
    <original>K</original>
    <variation>A</variation>
    <location>
        <position position="364"/>
    </location>
</feature>
<feature type="mutagenesis site" description="No effect on catalytic activity." evidence="8">
    <original>R</original>
    <variation>A</variation>
    <location>
        <position position="400"/>
    </location>
</feature>
<feature type="strand" evidence="20">
    <location>
        <begin position="27"/>
        <end position="30"/>
    </location>
</feature>
<feature type="strand" evidence="20">
    <location>
        <begin position="36"/>
        <end position="41"/>
    </location>
</feature>
<feature type="strand" evidence="20">
    <location>
        <begin position="46"/>
        <end position="55"/>
    </location>
</feature>
<feature type="helix" evidence="20">
    <location>
        <begin position="58"/>
        <end position="60"/>
    </location>
</feature>
<feature type="turn" evidence="20">
    <location>
        <begin position="63"/>
        <end position="67"/>
    </location>
</feature>
<feature type="helix" evidence="20">
    <location>
        <begin position="68"/>
        <end position="75"/>
    </location>
</feature>
<feature type="strand" evidence="20">
    <location>
        <begin position="78"/>
        <end position="82"/>
    </location>
</feature>
<feature type="helix" evidence="20">
    <location>
        <begin position="85"/>
        <end position="94"/>
    </location>
</feature>
<feature type="strand" evidence="20">
    <location>
        <begin position="98"/>
        <end position="103"/>
    </location>
</feature>
<feature type="strand" evidence="20">
    <location>
        <begin position="105"/>
        <end position="115"/>
    </location>
</feature>
<feature type="helix" evidence="20">
    <location>
        <begin position="116"/>
        <end position="118"/>
    </location>
</feature>
<feature type="helix" evidence="20">
    <location>
        <begin position="119"/>
        <end position="131"/>
    </location>
</feature>
<feature type="helix" evidence="20">
    <location>
        <begin position="137"/>
        <end position="154"/>
    </location>
</feature>
<feature type="helix" evidence="20">
    <location>
        <begin position="158"/>
        <end position="170"/>
    </location>
</feature>
<feature type="turn" evidence="20">
    <location>
        <begin position="171"/>
        <end position="173"/>
    </location>
</feature>
<feature type="helix" evidence="20">
    <location>
        <begin position="175"/>
        <end position="177"/>
    </location>
</feature>
<feature type="helix" evidence="20">
    <location>
        <begin position="184"/>
        <end position="189"/>
    </location>
</feature>
<feature type="helix" evidence="20">
    <location>
        <begin position="192"/>
        <end position="202"/>
    </location>
</feature>
<feature type="helix" evidence="20">
    <location>
        <begin position="205"/>
        <end position="207"/>
    </location>
</feature>
<feature type="strand" evidence="20">
    <location>
        <begin position="208"/>
        <end position="215"/>
    </location>
</feature>
<feature type="helix" evidence="20">
    <location>
        <begin position="218"/>
        <end position="229"/>
    </location>
</feature>
<feature type="strand" evidence="20">
    <location>
        <begin position="254"/>
        <end position="259"/>
    </location>
</feature>
<feature type="strand" evidence="20">
    <location>
        <begin position="264"/>
        <end position="273"/>
    </location>
</feature>
<feature type="helix" evidence="20">
    <location>
        <begin position="282"/>
        <end position="292"/>
    </location>
</feature>
<feature type="strand" evidence="20">
    <location>
        <begin position="294"/>
        <end position="296"/>
    </location>
</feature>
<feature type="turn" evidence="20">
    <location>
        <begin position="297"/>
        <end position="299"/>
    </location>
</feature>
<feature type="strand" evidence="20">
    <location>
        <begin position="302"/>
        <end position="305"/>
    </location>
</feature>
<feature type="helix" evidence="20">
    <location>
        <begin position="308"/>
        <end position="314"/>
    </location>
</feature>
<feature type="strand" evidence="20">
    <location>
        <begin position="321"/>
        <end position="329"/>
    </location>
</feature>
<feature type="strand" evidence="20">
    <location>
        <begin position="334"/>
        <end position="343"/>
    </location>
</feature>
<feature type="turn" evidence="20">
    <location>
        <begin position="344"/>
        <end position="346"/>
    </location>
</feature>
<feature type="helix" evidence="20">
    <location>
        <begin position="349"/>
        <end position="364"/>
    </location>
</feature>
<feature type="helix" evidence="20">
    <location>
        <begin position="370"/>
        <end position="385"/>
    </location>
</feature>
<feature type="helix" evidence="20">
    <location>
        <begin position="391"/>
        <end position="405"/>
    </location>
</feature>
<feature type="helix" evidence="20">
    <location>
        <begin position="411"/>
        <end position="419"/>
    </location>
</feature>
<feature type="helix" evidence="20">
    <location>
        <begin position="423"/>
        <end position="433"/>
    </location>
</feature>
<feature type="strand" evidence="20">
    <location>
        <begin position="434"/>
        <end position="436"/>
    </location>
</feature>
<feature type="strand" evidence="20">
    <location>
        <begin position="439"/>
        <end position="445"/>
    </location>
</feature>
<feature type="helix" evidence="20">
    <location>
        <begin position="447"/>
        <end position="449"/>
    </location>
</feature>
<feature type="helix" evidence="20">
    <location>
        <begin position="453"/>
        <end position="461"/>
    </location>
</feature>